<reference key="1">
    <citation type="journal article" date="1998" name="Science">
        <title>Genome sequence of an obligate intracellular pathogen of humans: Chlamydia trachomatis.</title>
        <authorList>
            <person name="Stephens R.S."/>
            <person name="Kalman S."/>
            <person name="Lammel C.J."/>
            <person name="Fan J."/>
            <person name="Marathe R."/>
            <person name="Aravind L."/>
            <person name="Mitchell W.P."/>
            <person name="Olinger L."/>
            <person name="Tatusov R.L."/>
            <person name="Zhao Q."/>
            <person name="Koonin E.V."/>
            <person name="Davis R.W."/>
        </authorList>
    </citation>
    <scope>NUCLEOTIDE SEQUENCE [LARGE SCALE GENOMIC DNA]</scope>
    <source>
        <strain>ATCC VR-885 / DSM 19411 / UW-3/Cx</strain>
    </source>
</reference>
<keyword id="KW-1185">Reference proteome</keyword>
<keyword id="KW-0687">Ribonucleoprotein</keyword>
<keyword id="KW-0689">Ribosomal protein</keyword>
<evidence type="ECO:0000256" key="1">
    <source>
        <dbReference type="SAM" id="MobiDB-lite"/>
    </source>
</evidence>
<evidence type="ECO:0000305" key="2"/>
<feature type="chain" id="PRO_0000187367" description="Large ribosomal subunit protein bL34">
    <location>
        <begin position="1"/>
        <end position="45"/>
    </location>
</feature>
<feature type="region of interest" description="Disordered" evidence="1">
    <location>
        <begin position="1"/>
        <end position="45"/>
    </location>
</feature>
<feature type="compositionally biased region" description="Basic residues" evidence="1">
    <location>
        <begin position="1"/>
        <end position="14"/>
    </location>
</feature>
<feature type="compositionally biased region" description="Basic residues" evidence="1">
    <location>
        <begin position="31"/>
        <end position="45"/>
    </location>
</feature>
<accession>O84790</accession>
<proteinExistence type="inferred from homology"/>
<sequence>MKRTYQPSKRKRRNSVGFRARMATKSGRNLLNRRRRHGRHSLIDL</sequence>
<gene>
    <name type="primary">rpmH</name>
    <name type="synonym">rl34</name>
    <name type="ordered locus">CT_785</name>
</gene>
<organism>
    <name type="scientific">Chlamydia trachomatis serovar D (strain ATCC VR-885 / DSM 19411 / UW-3/Cx)</name>
    <dbReference type="NCBI Taxonomy" id="272561"/>
    <lineage>
        <taxon>Bacteria</taxon>
        <taxon>Pseudomonadati</taxon>
        <taxon>Chlamydiota</taxon>
        <taxon>Chlamydiia</taxon>
        <taxon>Chlamydiales</taxon>
        <taxon>Chlamydiaceae</taxon>
        <taxon>Chlamydia/Chlamydophila group</taxon>
        <taxon>Chlamydia</taxon>
    </lineage>
</organism>
<comment type="similarity">
    <text evidence="2">Belongs to the bacterial ribosomal protein bL34 family.</text>
</comment>
<name>RL34_CHLTR</name>
<protein>
    <recommendedName>
        <fullName evidence="2">Large ribosomal subunit protein bL34</fullName>
    </recommendedName>
    <alternativeName>
        <fullName>50S ribosomal protein L34</fullName>
    </alternativeName>
</protein>
<dbReference type="EMBL" id="AE001273">
    <property type="protein sequence ID" value="AAC68380.1"/>
    <property type="molecule type" value="Genomic_DNA"/>
</dbReference>
<dbReference type="PIR" id="E71470">
    <property type="entry name" value="E71470"/>
</dbReference>
<dbReference type="RefSeq" id="NP_220304.1">
    <property type="nucleotide sequence ID" value="NC_000117.1"/>
</dbReference>
<dbReference type="RefSeq" id="WP_010725344.1">
    <property type="nucleotide sequence ID" value="NC_000117.1"/>
</dbReference>
<dbReference type="SMR" id="O84790"/>
<dbReference type="FunCoup" id="O84790">
    <property type="interactions" value="146"/>
</dbReference>
<dbReference type="STRING" id="272561.CT_785"/>
<dbReference type="EnsemblBacteria" id="AAC68380">
    <property type="protein sequence ID" value="AAC68380"/>
    <property type="gene ID" value="CT_785"/>
</dbReference>
<dbReference type="GeneID" id="884582"/>
<dbReference type="GeneID" id="93065660"/>
<dbReference type="KEGG" id="ctr:CT_785"/>
<dbReference type="PATRIC" id="fig|272561.5.peg.862"/>
<dbReference type="HOGENOM" id="CLU_129938_2_1_0"/>
<dbReference type="InParanoid" id="O84790"/>
<dbReference type="Proteomes" id="UP000000431">
    <property type="component" value="Chromosome"/>
</dbReference>
<dbReference type="GO" id="GO:1990904">
    <property type="term" value="C:ribonucleoprotein complex"/>
    <property type="evidence" value="ECO:0007669"/>
    <property type="project" value="UniProtKB-KW"/>
</dbReference>
<dbReference type="GO" id="GO:0005840">
    <property type="term" value="C:ribosome"/>
    <property type="evidence" value="ECO:0007669"/>
    <property type="project" value="UniProtKB-KW"/>
</dbReference>
<dbReference type="GO" id="GO:0003735">
    <property type="term" value="F:structural constituent of ribosome"/>
    <property type="evidence" value="ECO:0007669"/>
    <property type="project" value="InterPro"/>
</dbReference>
<dbReference type="GO" id="GO:0006412">
    <property type="term" value="P:translation"/>
    <property type="evidence" value="ECO:0007669"/>
    <property type="project" value="UniProtKB-UniRule"/>
</dbReference>
<dbReference type="FunFam" id="1.10.287.3980:FF:000001">
    <property type="entry name" value="Mitochondrial ribosomal protein L34"/>
    <property type="match status" value="1"/>
</dbReference>
<dbReference type="Gene3D" id="1.10.287.3980">
    <property type="match status" value="1"/>
</dbReference>
<dbReference type="HAMAP" id="MF_00391">
    <property type="entry name" value="Ribosomal_bL34"/>
    <property type="match status" value="1"/>
</dbReference>
<dbReference type="InterPro" id="IPR000271">
    <property type="entry name" value="Ribosomal_bL34"/>
</dbReference>
<dbReference type="InterPro" id="IPR020939">
    <property type="entry name" value="Ribosomal_bL34_CS"/>
</dbReference>
<dbReference type="NCBIfam" id="TIGR01030">
    <property type="entry name" value="rpmH_bact"/>
    <property type="match status" value="1"/>
</dbReference>
<dbReference type="PANTHER" id="PTHR14503:SF4">
    <property type="entry name" value="LARGE RIBOSOMAL SUBUNIT PROTEIN BL34M"/>
    <property type="match status" value="1"/>
</dbReference>
<dbReference type="PANTHER" id="PTHR14503">
    <property type="entry name" value="MITOCHONDRIAL RIBOSOMAL PROTEIN 34 FAMILY MEMBER"/>
    <property type="match status" value="1"/>
</dbReference>
<dbReference type="Pfam" id="PF00468">
    <property type="entry name" value="Ribosomal_L34"/>
    <property type="match status" value="1"/>
</dbReference>
<dbReference type="PROSITE" id="PS00784">
    <property type="entry name" value="RIBOSOMAL_L34"/>
    <property type="match status" value="1"/>
</dbReference>